<gene>
    <name type="primary">hcpA</name>
    <name type="ordered locus">jhp_0197</name>
</gene>
<evidence type="ECO:0000250" key="1"/>
<evidence type="ECO:0000255" key="2"/>
<evidence type="ECO:0000305" key="3"/>
<dbReference type="EC" id="3.5.2.6"/>
<dbReference type="EMBL" id="AE001439">
    <property type="protein sequence ID" value="AAD05781.1"/>
    <property type="molecule type" value="Genomic_DNA"/>
</dbReference>
<dbReference type="PIR" id="B71961">
    <property type="entry name" value="B71961"/>
</dbReference>
<dbReference type="RefSeq" id="WP_000901652.1">
    <property type="nucleotide sequence ID" value="NC_000921.1"/>
</dbReference>
<dbReference type="SMR" id="Q9ZMM1"/>
<dbReference type="KEGG" id="hpj:jhp_0197"/>
<dbReference type="PATRIC" id="fig|85963.30.peg.823"/>
<dbReference type="eggNOG" id="COG0790">
    <property type="taxonomic scope" value="Bacteria"/>
</dbReference>
<dbReference type="Proteomes" id="UP000000804">
    <property type="component" value="Chromosome"/>
</dbReference>
<dbReference type="GO" id="GO:0005576">
    <property type="term" value="C:extracellular region"/>
    <property type="evidence" value="ECO:0007669"/>
    <property type="project" value="UniProtKB-SubCell"/>
</dbReference>
<dbReference type="GO" id="GO:0008800">
    <property type="term" value="F:beta-lactamase activity"/>
    <property type="evidence" value="ECO:0007669"/>
    <property type="project" value="UniProtKB-EC"/>
</dbReference>
<dbReference type="GO" id="GO:0046677">
    <property type="term" value="P:response to antibiotic"/>
    <property type="evidence" value="ECO:0007669"/>
    <property type="project" value="UniProtKB-KW"/>
</dbReference>
<dbReference type="FunFam" id="1.25.40.10:FF:001426">
    <property type="entry name" value="Beta-lactamase HcpA"/>
    <property type="match status" value="1"/>
</dbReference>
<dbReference type="Gene3D" id="1.25.40.10">
    <property type="entry name" value="Tetratricopeptide repeat domain"/>
    <property type="match status" value="1"/>
</dbReference>
<dbReference type="InterPro" id="IPR040239">
    <property type="entry name" value="HcpB-like"/>
</dbReference>
<dbReference type="InterPro" id="IPR006597">
    <property type="entry name" value="Sel1-like"/>
</dbReference>
<dbReference type="InterPro" id="IPR011990">
    <property type="entry name" value="TPR-like_helical_dom_sf"/>
</dbReference>
<dbReference type="InterPro" id="IPR019734">
    <property type="entry name" value="TPR_rpt"/>
</dbReference>
<dbReference type="PANTHER" id="PTHR13891">
    <property type="entry name" value="CYTOCHROME C OXIDASE ASSEMBLY FACTOR 7"/>
    <property type="match status" value="1"/>
</dbReference>
<dbReference type="PANTHER" id="PTHR13891:SF1">
    <property type="entry name" value="CYTOCHROME C OXIDASE ASSEMBLY FACTOR 7"/>
    <property type="match status" value="1"/>
</dbReference>
<dbReference type="Pfam" id="PF08238">
    <property type="entry name" value="Sel1"/>
    <property type="match status" value="5"/>
</dbReference>
<dbReference type="Pfam" id="PF13181">
    <property type="entry name" value="TPR_8"/>
    <property type="match status" value="1"/>
</dbReference>
<dbReference type="SMART" id="SM00671">
    <property type="entry name" value="SEL1"/>
    <property type="match status" value="6"/>
</dbReference>
<dbReference type="SMART" id="SM00028">
    <property type="entry name" value="TPR"/>
    <property type="match status" value="2"/>
</dbReference>
<dbReference type="SUPFAM" id="SSF81901">
    <property type="entry name" value="HCP-like"/>
    <property type="match status" value="1"/>
</dbReference>
<sequence>MLGSVKKTLFGVLCLGALCLRGLMAEPDAKELVSLGIESVKKQDFAQAKAHFEKACELKEGFGCVFLGAFYEEGKGVGKDLKKAIQFYTKGCELNDGYGCRLLGNLYYNGQGVSKDAKKASQYYSKSCELNHAEGCTVLGSLHHYGVGTPKDLRKALDLYEKACDLKDSPGCINAGYMYGVAKNFKEAIVRYSKACELKDGRGCYNLGVMQYNAQGTAKDEKQAVENFKKGCKSSVKEACDALKELKIEL</sequence>
<comment type="function">
    <text evidence="1">Slowly hydrolyzes 6-aminopenicillinic acid and 7-aminocephalosporanic acid (ACA) derivatives. May be involved in the synthesis of the cell wall peptidoglycan (By similarity).</text>
</comment>
<comment type="catalytic activity">
    <reaction>
        <text>a beta-lactam + H2O = a substituted beta-amino acid</text>
        <dbReference type="Rhea" id="RHEA:20401"/>
        <dbReference type="ChEBI" id="CHEBI:15377"/>
        <dbReference type="ChEBI" id="CHEBI:35627"/>
        <dbReference type="ChEBI" id="CHEBI:140347"/>
        <dbReference type="EC" id="3.5.2.6"/>
    </reaction>
</comment>
<comment type="activity regulation">
    <text evidence="1">Inhibited by cloxacillin and oxacillin but not by ACA derivatives or metal chelators.</text>
</comment>
<comment type="subcellular location">
    <subcellularLocation>
        <location evidence="1">Secreted</location>
    </subcellularLocation>
</comment>
<comment type="similarity">
    <text evidence="3">Belongs to the hcp beta-lactamase family.</text>
</comment>
<accession>Q9ZMM1</accession>
<organism>
    <name type="scientific">Helicobacter pylori (strain J99 / ATCC 700824)</name>
    <name type="common">Campylobacter pylori J99</name>
    <dbReference type="NCBI Taxonomy" id="85963"/>
    <lineage>
        <taxon>Bacteria</taxon>
        <taxon>Pseudomonadati</taxon>
        <taxon>Campylobacterota</taxon>
        <taxon>Epsilonproteobacteria</taxon>
        <taxon>Campylobacterales</taxon>
        <taxon>Helicobacteraceae</taxon>
        <taxon>Helicobacter</taxon>
    </lineage>
</organism>
<protein>
    <recommendedName>
        <fullName>Beta-lactamase HcpA</fullName>
        <ecNumber>3.5.2.6</ecNumber>
    </recommendedName>
    <alternativeName>
        <fullName>Cysteine-rich 28 kDa protein</fullName>
    </alternativeName>
</protein>
<keyword id="KW-0046">Antibiotic resistance</keyword>
<keyword id="KW-1015">Disulfide bond</keyword>
<keyword id="KW-0378">Hydrolase</keyword>
<keyword id="KW-0677">Repeat</keyword>
<keyword id="KW-0964">Secreted</keyword>
<keyword id="KW-0732">Signal</keyword>
<keyword id="KW-0802">TPR repeat</keyword>
<feature type="signal peptide" evidence="2">
    <location>
        <begin position="1"/>
        <end position="25"/>
    </location>
</feature>
<feature type="chain" id="PRO_0000013195" description="Beta-lactamase HcpA">
    <location>
        <begin position="26"/>
        <end position="250"/>
    </location>
</feature>
<feature type="repeat" description="TPR 1">
    <location>
        <begin position="29"/>
        <end position="62"/>
    </location>
</feature>
<feature type="repeat" description="TPR 2">
    <location>
        <begin position="67"/>
        <end position="98"/>
    </location>
</feature>
<feature type="repeat" description="TPR 3">
    <location>
        <begin position="100"/>
        <end position="133"/>
    </location>
</feature>
<feature type="repeat" description="TPR 4">
    <location>
        <begin position="134"/>
        <end position="169"/>
    </location>
</feature>
<feature type="repeat" description="TPR 5">
    <location>
        <begin position="170"/>
        <end position="202"/>
    </location>
</feature>
<feature type="disulfide bond" evidence="1">
    <location>
        <begin position="56"/>
        <end position="64"/>
    </location>
</feature>
<feature type="disulfide bond" evidence="1">
    <location>
        <begin position="92"/>
        <end position="100"/>
    </location>
</feature>
<feature type="disulfide bond" evidence="1">
    <location>
        <begin position="128"/>
        <end position="136"/>
    </location>
</feature>
<feature type="disulfide bond" evidence="1">
    <location>
        <begin position="164"/>
        <end position="172"/>
    </location>
</feature>
<feature type="disulfide bond" evidence="1">
    <location>
        <begin position="196"/>
        <end position="204"/>
    </location>
</feature>
<feature type="disulfide bond" evidence="1">
    <location>
        <begin position="232"/>
        <end position="240"/>
    </location>
</feature>
<reference key="1">
    <citation type="journal article" date="1999" name="Nature">
        <title>Genomic sequence comparison of two unrelated isolates of the human gastric pathogen Helicobacter pylori.</title>
        <authorList>
            <person name="Alm R.A."/>
            <person name="Ling L.-S.L."/>
            <person name="Moir D.T."/>
            <person name="King B.L."/>
            <person name="Brown E.D."/>
            <person name="Doig P.C."/>
            <person name="Smith D.R."/>
            <person name="Noonan B."/>
            <person name="Guild B.C."/>
            <person name="deJonge B.L."/>
            <person name="Carmel G."/>
            <person name="Tummino P.J."/>
            <person name="Caruso A."/>
            <person name="Uria-Nickelsen M."/>
            <person name="Mills D.M."/>
            <person name="Ives C."/>
            <person name="Gibson R."/>
            <person name="Merberg D."/>
            <person name="Mills S.D."/>
            <person name="Jiang Q."/>
            <person name="Taylor D.E."/>
            <person name="Vovis G.F."/>
            <person name="Trust T.J."/>
        </authorList>
    </citation>
    <scope>NUCLEOTIDE SEQUENCE [LARGE SCALE GENOMIC DNA]</scope>
    <source>
        <strain>J99 / ATCC 700824</strain>
    </source>
</reference>
<name>HCPA_HELPJ</name>
<proteinExistence type="inferred from homology"/>